<protein>
    <recommendedName>
        <fullName evidence="1">Argininosuccinate lyase</fullName>
        <shortName evidence="1">ASAL</shortName>
        <ecNumber evidence="1">4.3.2.1</ecNumber>
    </recommendedName>
    <alternativeName>
        <fullName evidence="1">Arginosuccinase</fullName>
    </alternativeName>
</protein>
<keyword id="KW-0028">Amino-acid biosynthesis</keyword>
<keyword id="KW-0055">Arginine biosynthesis</keyword>
<keyword id="KW-0963">Cytoplasm</keyword>
<keyword id="KW-0456">Lyase</keyword>
<keyword id="KW-1185">Reference proteome</keyword>
<name>ARLY_PARP8</name>
<reference key="1">
    <citation type="journal article" date="2014" name="Stand. Genomic Sci.">
        <title>Complete genome sequence of Burkholderia phymatum STM815(T), a broad host range and efficient nitrogen-fixing symbiont of Mimosa species.</title>
        <authorList>
            <person name="Moulin L."/>
            <person name="Klonowska A."/>
            <person name="Caroline B."/>
            <person name="Booth K."/>
            <person name="Vriezen J.A."/>
            <person name="Melkonian R."/>
            <person name="James E.K."/>
            <person name="Young J.P."/>
            <person name="Bena G."/>
            <person name="Hauser L."/>
            <person name="Land M."/>
            <person name="Kyrpides N."/>
            <person name="Bruce D."/>
            <person name="Chain P."/>
            <person name="Copeland A."/>
            <person name="Pitluck S."/>
            <person name="Woyke T."/>
            <person name="Lizotte-Waniewski M."/>
            <person name="Bristow J."/>
            <person name="Riley M."/>
        </authorList>
    </citation>
    <scope>NUCLEOTIDE SEQUENCE [LARGE SCALE GENOMIC DNA]</scope>
    <source>
        <strain>DSM 17167 / CIP 108236 / LMG 21445 / STM815</strain>
    </source>
</reference>
<accession>B2JEP3</accession>
<proteinExistence type="inferred from homology"/>
<organism>
    <name type="scientific">Paraburkholderia phymatum (strain DSM 17167 / CIP 108236 / LMG 21445 / STM815)</name>
    <name type="common">Burkholderia phymatum</name>
    <dbReference type="NCBI Taxonomy" id="391038"/>
    <lineage>
        <taxon>Bacteria</taxon>
        <taxon>Pseudomonadati</taxon>
        <taxon>Pseudomonadota</taxon>
        <taxon>Betaproteobacteria</taxon>
        <taxon>Burkholderiales</taxon>
        <taxon>Burkholderiaceae</taxon>
        <taxon>Paraburkholderia</taxon>
    </lineage>
</organism>
<gene>
    <name evidence="1" type="primary">argH</name>
    <name type="ordered locus">Bphy_2183</name>
</gene>
<feature type="chain" id="PRO_1000089071" description="Argininosuccinate lyase">
    <location>
        <begin position="1"/>
        <end position="468"/>
    </location>
</feature>
<sequence length="468" mass="51069">MTSQLHKKGEAWSARFSEPMSELVKRYTSSVFFDKRLALVDIEGSLAHASMLAAQKIISADDLAAIQRGMAQIQGEIERGEFEWQLDLEDVHLNIEARLTALIGDAGKRLHTGRSRNDQVATDIRLWLRGEIDRIGDLLKGLRSALLDLAEQNADTIMPGFTHLQVAQPVTFGHHLLAYVEMFSRDAERMLDTRKRVNRLPLGAAALAGTSYPIDRHAVAKTLGFDGICANSLDAVSDRDFAIEFTAASALVMTHVSRFSEELVLWMSPRVGFIDIADRFCTGSSIMPQKKNPDVPELARGKTGRVNGHLMALLTLMKGQPLAYNKDNQEDKEPLFDTVDTVADTLRIFAEMVAGITVKSENMRGAALQGFSTATDLADYLVKRGLPFRDAHEAVAHAVKVCDDRGCDLSDLTLDEMKAELPNVAALLGDDVFGYLTLEGSVASRNHAGGTAPDQVRAAIAAARAALG</sequence>
<evidence type="ECO:0000255" key="1">
    <source>
        <dbReference type="HAMAP-Rule" id="MF_00006"/>
    </source>
</evidence>
<dbReference type="EC" id="4.3.2.1" evidence="1"/>
<dbReference type="EMBL" id="CP001043">
    <property type="protein sequence ID" value="ACC71358.1"/>
    <property type="molecule type" value="Genomic_DNA"/>
</dbReference>
<dbReference type="RefSeq" id="WP_012401564.1">
    <property type="nucleotide sequence ID" value="NC_010622.1"/>
</dbReference>
<dbReference type="SMR" id="B2JEP3"/>
<dbReference type="STRING" id="391038.Bphy_2183"/>
<dbReference type="KEGG" id="bph:Bphy_2183"/>
<dbReference type="eggNOG" id="COG0165">
    <property type="taxonomic scope" value="Bacteria"/>
</dbReference>
<dbReference type="HOGENOM" id="CLU_027272_2_3_4"/>
<dbReference type="OrthoDB" id="9769623at2"/>
<dbReference type="UniPathway" id="UPA00068">
    <property type="reaction ID" value="UER00114"/>
</dbReference>
<dbReference type="Proteomes" id="UP000001192">
    <property type="component" value="Chromosome 1"/>
</dbReference>
<dbReference type="GO" id="GO:0005829">
    <property type="term" value="C:cytosol"/>
    <property type="evidence" value="ECO:0007669"/>
    <property type="project" value="TreeGrafter"/>
</dbReference>
<dbReference type="GO" id="GO:0004056">
    <property type="term" value="F:argininosuccinate lyase activity"/>
    <property type="evidence" value="ECO:0007669"/>
    <property type="project" value="UniProtKB-UniRule"/>
</dbReference>
<dbReference type="GO" id="GO:0042450">
    <property type="term" value="P:arginine biosynthetic process via ornithine"/>
    <property type="evidence" value="ECO:0007669"/>
    <property type="project" value="InterPro"/>
</dbReference>
<dbReference type="GO" id="GO:0006526">
    <property type="term" value="P:L-arginine biosynthetic process"/>
    <property type="evidence" value="ECO:0007669"/>
    <property type="project" value="UniProtKB-UniRule"/>
</dbReference>
<dbReference type="CDD" id="cd01359">
    <property type="entry name" value="Argininosuccinate_lyase"/>
    <property type="match status" value="1"/>
</dbReference>
<dbReference type="FunFam" id="1.10.275.10:FF:000002">
    <property type="entry name" value="Argininosuccinate lyase"/>
    <property type="match status" value="1"/>
</dbReference>
<dbReference type="FunFam" id="1.10.40.30:FF:000001">
    <property type="entry name" value="Argininosuccinate lyase"/>
    <property type="match status" value="1"/>
</dbReference>
<dbReference type="FunFam" id="1.20.200.10:FF:000015">
    <property type="entry name" value="argininosuccinate lyase isoform X2"/>
    <property type="match status" value="1"/>
</dbReference>
<dbReference type="Gene3D" id="1.10.40.30">
    <property type="entry name" value="Fumarase/aspartase (C-terminal domain)"/>
    <property type="match status" value="1"/>
</dbReference>
<dbReference type="Gene3D" id="1.20.200.10">
    <property type="entry name" value="Fumarase/aspartase (Central domain)"/>
    <property type="match status" value="1"/>
</dbReference>
<dbReference type="Gene3D" id="1.10.275.10">
    <property type="entry name" value="Fumarase/aspartase (N-terminal domain)"/>
    <property type="match status" value="1"/>
</dbReference>
<dbReference type="HAMAP" id="MF_00006">
    <property type="entry name" value="Arg_succ_lyase"/>
    <property type="match status" value="1"/>
</dbReference>
<dbReference type="InterPro" id="IPR029419">
    <property type="entry name" value="Arg_succ_lyase_C"/>
</dbReference>
<dbReference type="InterPro" id="IPR009049">
    <property type="entry name" value="Argininosuccinate_lyase"/>
</dbReference>
<dbReference type="InterPro" id="IPR024083">
    <property type="entry name" value="Fumarase/histidase_N"/>
</dbReference>
<dbReference type="InterPro" id="IPR020557">
    <property type="entry name" value="Fumarate_lyase_CS"/>
</dbReference>
<dbReference type="InterPro" id="IPR000362">
    <property type="entry name" value="Fumarate_lyase_fam"/>
</dbReference>
<dbReference type="InterPro" id="IPR022761">
    <property type="entry name" value="Fumarate_lyase_N"/>
</dbReference>
<dbReference type="InterPro" id="IPR008948">
    <property type="entry name" value="L-Aspartase-like"/>
</dbReference>
<dbReference type="NCBIfam" id="TIGR00838">
    <property type="entry name" value="argH"/>
    <property type="match status" value="1"/>
</dbReference>
<dbReference type="PANTHER" id="PTHR43814">
    <property type="entry name" value="ARGININOSUCCINATE LYASE"/>
    <property type="match status" value="1"/>
</dbReference>
<dbReference type="PANTHER" id="PTHR43814:SF1">
    <property type="entry name" value="ARGININOSUCCINATE LYASE"/>
    <property type="match status" value="1"/>
</dbReference>
<dbReference type="Pfam" id="PF14698">
    <property type="entry name" value="ASL_C2"/>
    <property type="match status" value="1"/>
</dbReference>
<dbReference type="Pfam" id="PF00206">
    <property type="entry name" value="Lyase_1"/>
    <property type="match status" value="1"/>
</dbReference>
<dbReference type="PRINTS" id="PR00145">
    <property type="entry name" value="ARGSUCLYASE"/>
</dbReference>
<dbReference type="PRINTS" id="PR00149">
    <property type="entry name" value="FUMRATELYASE"/>
</dbReference>
<dbReference type="SUPFAM" id="SSF48557">
    <property type="entry name" value="L-aspartase-like"/>
    <property type="match status" value="1"/>
</dbReference>
<dbReference type="PROSITE" id="PS00163">
    <property type="entry name" value="FUMARATE_LYASES"/>
    <property type="match status" value="1"/>
</dbReference>
<comment type="catalytic activity">
    <reaction evidence="1">
        <text>2-(N(omega)-L-arginino)succinate = fumarate + L-arginine</text>
        <dbReference type="Rhea" id="RHEA:24020"/>
        <dbReference type="ChEBI" id="CHEBI:29806"/>
        <dbReference type="ChEBI" id="CHEBI:32682"/>
        <dbReference type="ChEBI" id="CHEBI:57472"/>
        <dbReference type="EC" id="4.3.2.1"/>
    </reaction>
</comment>
<comment type="pathway">
    <text evidence="1">Amino-acid biosynthesis; L-arginine biosynthesis; L-arginine from L-ornithine and carbamoyl phosphate: step 3/3.</text>
</comment>
<comment type="subcellular location">
    <subcellularLocation>
        <location evidence="1">Cytoplasm</location>
    </subcellularLocation>
</comment>
<comment type="similarity">
    <text evidence="1">Belongs to the lyase 1 family. Argininosuccinate lyase subfamily.</text>
</comment>